<name>HIS3_RUEST</name>
<accession>Q1GGT9</accession>
<gene>
    <name evidence="1" type="primary">hisI</name>
    <name type="ordered locus">TM1040_1394</name>
</gene>
<reference key="1">
    <citation type="submission" date="2006-05" db="EMBL/GenBank/DDBJ databases">
        <title>Complete sequence of chromosome of Silicibacter sp. TM1040.</title>
        <authorList>
            <consortium name="US DOE Joint Genome Institute"/>
            <person name="Copeland A."/>
            <person name="Lucas S."/>
            <person name="Lapidus A."/>
            <person name="Barry K."/>
            <person name="Detter J.C."/>
            <person name="Glavina del Rio T."/>
            <person name="Hammon N."/>
            <person name="Israni S."/>
            <person name="Dalin E."/>
            <person name="Tice H."/>
            <person name="Pitluck S."/>
            <person name="Brettin T."/>
            <person name="Bruce D."/>
            <person name="Han C."/>
            <person name="Tapia R."/>
            <person name="Goodwin L."/>
            <person name="Thompson L.S."/>
            <person name="Gilna P."/>
            <person name="Schmutz J."/>
            <person name="Larimer F."/>
            <person name="Land M."/>
            <person name="Hauser L."/>
            <person name="Kyrpides N."/>
            <person name="Kim E."/>
            <person name="Belas R."/>
            <person name="Moran M.A."/>
            <person name="Buchan A."/>
            <person name="Gonzalez J.M."/>
            <person name="Schell M.A."/>
            <person name="Sun F."/>
            <person name="Richardson P."/>
        </authorList>
    </citation>
    <scope>NUCLEOTIDE SEQUENCE [LARGE SCALE GENOMIC DNA]</scope>
    <source>
        <strain>TM1040</strain>
    </source>
</reference>
<comment type="function">
    <text evidence="1">Catalyzes the hydrolysis of the adenine ring of phosphoribosyl-AMP.</text>
</comment>
<comment type="catalytic activity">
    <reaction evidence="1">
        <text>1-(5-phospho-beta-D-ribosyl)-5'-AMP + H2O = 1-(5-phospho-beta-D-ribosyl)-5-[(5-phospho-beta-D-ribosylamino)methylideneamino]imidazole-4-carboxamide</text>
        <dbReference type="Rhea" id="RHEA:20049"/>
        <dbReference type="ChEBI" id="CHEBI:15377"/>
        <dbReference type="ChEBI" id="CHEBI:58435"/>
        <dbReference type="ChEBI" id="CHEBI:59457"/>
        <dbReference type="EC" id="3.5.4.19"/>
    </reaction>
</comment>
<comment type="cofactor">
    <cofactor evidence="1">
        <name>Mg(2+)</name>
        <dbReference type="ChEBI" id="CHEBI:18420"/>
    </cofactor>
    <text evidence="1">Binds 1 Mg(2+) ion per subunit.</text>
</comment>
<comment type="cofactor">
    <cofactor evidence="1">
        <name>Zn(2+)</name>
        <dbReference type="ChEBI" id="CHEBI:29105"/>
    </cofactor>
    <text evidence="1">Binds 1 zinc ion per subunit.</text>
</comment>
<comment type="pathway">
    <text evidence="1">Amino-acid biosynthesis; L-histidine biosynthesis; L-histidine from 5-phospho-alpha-D-ribose 1-diphosphate: step 3/9.</text>
</comment>
<comment type="subunit">
    <text evidence="1">Homodimer.</text>
</comment>
<comment type="subcellular location">
    <subcellularLocation>
        <location evidence="1">Cytoplasm</location>
    </subcellularLocation>
</comment>
<comment type="similarity">
    <text evidence="1">Belongs to the PRA-CH family.</text>
</comment>
<proteinExistence type="inferred from homology"/>
<keyword id="KW-0028">Amino-acid biosynthesis</keyword>
<keyword id="KW-0963">Cytoplasm</keyword>
<keyword id="KW-0368">Histidine biosynthesis</keyword>
<keyword id="KW-0378">Hydrolase</keyword>
<keyword id="KW-0460">Magnesium</keyword>
<keyword id="KW-0479">Metal-binding</keyword>
<keyword id="KW-1185">Reference proteome</keyword>
<keyword id="KW-0862">Zinc</keyword>
<feature type="chain" id="PRO_0000319718" description="Phosphoribosyl-AMP cyclohydrolase">
    <location>
        <begin position="1"/>
        <end position="129"/>
    </location>
</feature>
<feature type="binding site" evidence="1">
    <location>
        <position position="87"/>
    </location>
    <ligand>
        <name>Mg(2+)</name>
        <dbReference type="ChEBI" id="CHEBI:18420"/>
    </ligand>
</feature>
<feature type="binding site" evidence="1">
    <location>
        <position position="88"/>
    </location>
    <ligand>
        <name>Zn(2+)</name>
        <dbReference type="ChEBI" id="CHEBI:29105"/>
        <note>ligand shared between dimeric partners</note>
    </ligand>
</feature>
<feature type="binding site" evidence="1">
    <location>
        <position position="89"/>
    </location>
    <ligand>
        <name>Mg(2+)</name>
        <dbReference type="ChEBI" id="CHEBI:18420"/>
    </ligand>
</feature>
<feature type="binding site" evidence="1">
    <location>
        <position position="91"/>
    </location>
    <ligand>
        <name>Mg(2+)</name>
        <dbReference type="ChEBI" id="CHEBI:18420"/>
    </ligand>
</feature>
<feature type="binding site" evidence="1">
    <location>
        <position position="104"/>
    </location>
    <ligand>
        <name>Zn(2+)</name>
        <dbReference type="ChEBI" id="CHEBI:29105"/>
        <note>ligand shared between dimeric partners</note>
    </ligand>
</feature>
<feature type="binding site" evidence="1">
    <location>
        <position position="111"/>
    </location>
    <ligand>
        <name>Zn(2+)</name>
        <dbReference type="ChEBI" id="CHEBI:29105"/>
        <note>ligand shared between dimeric partners</note>
    </ligand>
</feature>
<protein>
    <recommendedName>
        <fullName evidence="1">Phosphoribosyl-AMP cyclohydrolase</fullName>
        <shortName evidence="1">PRA-CH</shortName>
        <ecNumber evidence="1">3.5.4.19</ecNumber>
    </recommendedName>
</protein>
<dbReference type="EC" id="3.5.4.19" evidence="1"/>
<dbReference type="EMBL" id="CP000377">
    <property type="protein sequence ID" value="ABF64127.1"/>
    <property type="molecule type" value="Genomic_DNA"/>
</dbReference>
<dbReference type="RefSeq" id="WP_011538731.1">
    <property type="nucleotide sequence ID" value="NC_008044.1"/>
</dbReference>
<dbReference type="SMR" id="Q1GGT9"/>
<dbReference type="STRING" id="292414.TM1040_1394"/>
<dbReference type="KEGG" id="sit:TM1040_1394"/>
<dbReference type="eggNOG" id="COG0139">
    <property type="taxonomic scope" value="Bacteria"/>
</dbReference>
<dbReference type="HOGENOM" id="CLU_048577_5_2_5"/>
<dbReference type="OrthoDB" id="9795769at2"/>
<dbReference type="UniPathway" id="UPA00031">
    <property type="reaction ID" value="UER00008"/>
</dbReference>
<dbReference type="Proteomes" id="UP000000636">
    <property type="component" value="Chromosome"/>
</dbReference>
<dbReference type="GO" id="GO:0005737">
    <property type="term" value="C:cytoplasm"/>
    <property type="evidence" value="ECO:0007669"/>
    <property type="project" value="UniProtKB-SubCell"/>
</dbReference>
<dbReference type="GO" id="GO:0000287">
    <property type="term" value="F:magnesium ion binding"/>
    <property type="evidence" value="ECO:0007669"/>
    <property type="project" value="UniProtKB-UniRule"/>
</dbReference>
<dbReference type="GO" id="GO:0004635">
    <property type="term" value="F:phosphoribosyl-AMP cyclohydrolase activity"/>
    <property type="evidence" value="ECO:0007669"/>
    <property type="project" value="UniProtKB-UniRule"/>
</dbReference>
<dbReference type="GO" id="GO:0008270">
    <property type="term" value="F:zinc ion binding"/>
    <property type="evidence" value="ECO:0007669"/>
    <property type="project" value="UniProtKB-UniRule"/>
</dbReference>
<dbReference type="GO" id="GO:0000105">
    <property type="term" value="P:L-histidine biosynthetic process"/>
    <property type="evidence" value="ECO:0007669"/>
    <property type="project" value="UniProtKB-UniRule"/>
</dbReference>
<dbReference type="FunFam" id="3.10.20.810:FF:000001">
    <property type="entry name" value="Histidine biosynthesis bifunctional protein HisIE"/>
    <property type="match status" value="1"/>
</dbReference>
<dbReference type="Gene3D" id="3.10.20.810">
    <property type="entry name" value="Phosphoribosyl-AMP cyclohydrolase"/>
    <property type="match status" value="1"/>
</dbReference>
<dbReference type="HAMAP" id="MF_01021">
    <property type="entry name" value="HisI"/>
    <property type="match status" value="1"/>
</dbReference>
<dbReference type="InterPro" id="IPR026660">
    <property type="entry name" value="PRA-CH"/>
</dbReference>
<dbReference type="InterPro" id="IPR002496">
    <property type="entry name" value="PRib_AMP_CycHydrolase_dom"/>
</dbReference>
<dbReference type="InterPro" id="IPR038019">
    <property type="entry name" value="PRib_AMP_CycHydrolase_sf"/>
</dbReference>
<dbReference type="NCBIfam" id="NF000768">
    <property type="entry name" value="PRK00051.1"/>
    <property type="match status" value="1"/>
</dbReference>
<dbReference type="PANTHER" id="PTHR42945">
    <property type="entry name" value="HISTIDINE BIOSYNTHESIS BIFUNCTIONAL PROTEIN"/>
    <property type="match status" value="1"/>
</dbReference>
<dbReference type="PANTHER" id="PTHR42945:SF1">
    <property type="entry name" value="HISTIDINE BIOSYNTHESIS BIFUNCTIONAL PROTEIN HIS7"/>
    <property type="match status" value="1"/>
</dbReference>
<dbReference type="Pfam" id="PF01502">
    <property type="entry name" value="PRA-CH"/>
    <property type="match status" value="1"/>
</dbReference>
<dbReference type="SUPFAM" id="SSF141734">
    <property type="entry name" value="HisI-like"/>
    <property type="match status" value="1"/>
</dbReference>
<sequence>MQKVFNMHDLVKFSPETLKYNEAGLVPCIAQDVESGEILMMAWMNAESVAKTLETGRVTYWSRSRQSFWIKGESSGHVQELVELRVDCDRDALLAMVRQTGPACHTNRRSCFYTAIRDGEEHEIMTPIS</sequence>
<organism>
    <name type="scientific">Ruegeria sp. (strain TM1040)</name>
    <name type="common">Silicibacter sp.</name>
    <dbReference type="NCBI Taxonomy" id="292414"/>
    <lineage>
        <taxon>Bacteria</taxon>
        <taxon>Pseudomonadati</taxon>
        <taxon>Pseudomonadota</taxon>
        <taxon>Alphaproteobacteria</taxon>
        <taxon>Rhodobacterales</taxon>
        <taxon>Roseobacteraceae</taxon>
        <taxon>Ruegeria</taxon>
    </lineage>
</organism>
<evidence type="ECO:0000255" key="1">
    <source>
        <dbReference type="HAMAP-Rule" id="MF_01021"/>
    </source>
</evidence>